<gene>
    <name evidence="1" type="primary">hslO</name>
    <name type="ordered locus">BCQ_0076</name>
</gene>
<proteinExistence type="inferred from homology"/>
<evidence type="ECO:0000255" key="1">
    <source>
        <dbReference type="HAMAP-Rule" id="MF_00117"/>
    </source>
</evidence>
<accession>B9IZF0</accession>
<feature type="chain" id="PRO_1000119252" description="33 kDa chaperonin">
    <location>
        <begin position="1"/>
        <end position="291"/>
    </location>
</feature>
<feature type="disulfide bond" description="Redox-active" evidence="1">
    <location>
        <begin position="237"/>
        <end position="239"/>
    </location>
</feature>
<feature type="disulfide bond" description="Redox-active" evidence="1">
    <location>
        <begin position="270"/>
        <end position="273"/>
    </location>
</feature>
<name>HSLO_BACCQ</name>
<reference key="1">
    <citation type="journal article" date="2009" name="J. Bacteriol.">
        <title>Complete genome sequence of the extremophilic Bacillus cereus strain Q1 with industrial applications.</title>
        <authorList>
            <person name="Xiong Z."/>
            <person name="Jiang Y."/>
            <person name="Qi D."/>
            <person name="Lu H."/>
            <person name="Yang F."/>
            <person name="Yang J."/>
            <person name="Chen L."/>
            <person name="Sun L."/>
            <person name="Xu X."/>
            <person name="Xue Y."/>
            <person name="Zhu Y."/>
            <person name="Jin Q."/>
        </authorList>
    </citation>
    <scope>NUCLEOTIDE SEQUENCE [LARGE SCALE GENOMIC DNA]</scope>
    <source>
        <strain>Q1</strain>
    </source>
</reference>
<sequence>MKDYLVKALAFDGEVRAYSVRTTNTVSEAQRRHDTWRTASAALGRSLTAGTMMGAMLKGDQKLTIKVEGNGPIGPILVDAHANGDVRGYVTNPHVDFEGTEQGKLRVYQAVGTEGFVTVIKDIGMREPFIGQSPIVSGELGEDFTYYFAVSEQTPSSVGVGVLVNGDDSILAAGGFILQIMPGAQEETISFIEERLQKIPPVSTLIEQGLSPEELLYAVLGEDKVKVLETMDVQFNCTCSRERIESVLISLGKTELEQVREEEEETEVHCHFCNERYKFSKEDITNLIENL</sequence>
<organism>
    <name type="scientific">Bacillus cereus (strain Q1)</name>
    <dbReference type="NCBI Taxonomy" id="361100"/>
    <lineage>
        <taxon>Bacteria</taxon>
        <taxon>Bacillati</taxon>
        <taxon>Bacillota</taxon>
        <taxon>Bacilli</taxon>
        <taxon>Bacillales</taxon>
        <taxon>Bacillaceae</taxon>
        <taxon>Bacillus</taxon>
        <taxon>Bacillus cereus group</taxon>
    </lineage>
</organism>
<comment type="function">
    <text evidence="1">Redox regulated molecular chaperone. Protects both thermally unfolding and oxidatively damaged proteins from irreversible aggregation. Plays an important role in the bacterial defense system toward oxidative stress.</text>
</comment>
<comment type="subcellular location">
    <subcellularLocation>
        <location evidence="1">Cytoplasm</location>
    </subcellularLocation>
</comment>
<comment type="PTM">
    <text evidence="1">Under oxidizing conditions two disulfide bonds are formed involving the reactive cysteines. Under reducing conditions zinc is bound to the reactive cysteines and the protein is inactive.</text>
</comment>
<comment type="similarity">
    <text evidence="1">Belongs to the HSP33 family.</text>
</comment>
<dbReference type="EMBL" id="CP000227">
    <property type="protein sequence ID" value="ACM10594.1"/>
    <property type="molecule type" value="Genomic_DNA"/>
</dbReference>
<dbReference type="SMR" id="B9IZF0"/>
<dbReference type="KEGG" id="bcq:BCQ_0076"/>
<dbReference type="HOGENOM" id="CLU_054493_1_0_9"/>
<dbReference type="Proteomes" id="UP000000441">
    <property type="component" value="Chromosome"/>
</dbReference>
<dbReference type="GO" id="GO:0005737">
    <property type="term" value="C:cytoplasm"/>
    <property type="evidence" value="ECO:0007669"/>
    <property type="project" value="UniProtKB-SubCell"/>
</dbReference>
<dbReference type="GO" id="GO:0044183">
    <property type="term" value="F:protein folding chaperone"/>
    <property type="evidence" value="ECO:0007669"/>
    <property type="project" value="TreeGrafter"/>
</dbReference>
<dbReference type="GO" id="GO:0051082">
    <property type="term" value="F:unfolded protein binding"/>
    <property type="evidence" value="ECO:0007669"/>
    <property type="project" value="UniProtKB-UniRule"/>
</dbReference>
<dbReference type="GO" id="GO:0042026">
    <property type="term" value="P:protein refolding"/>
    <property type="evidence" value="ECO:0007669"/>
    <property type="project" value="TreeGrafter"/>
</dbReference>
<dbReference type="CDD" id="cd00498">
    <property type="entry name" value="Hsp33"/>
    <property type="match status" value="1"/>
</dbReference>
<dbReference type="Gene3D" id="3.55.30.10">
    <property type="entry name" value="Hsp33 domain"/>
    <property type="match status" value="1"/>
</dbReference>
<dbReference type="Gene3D" id="3.90.1280.10">
    <property type="entry name" value="HSP33 redox switch-like"/>
    <property type="match status" value="1"/>
</dbReference>
<dbReference type="HAMAP" id="MF_00117">
    <property type="entry name" value="HslO"/>
    <property type="match status" value="1"/>
</dbReference>
<dbReference type="InterPro" id="IPR000397">
    <property type="entry name" value="Heat_shock_Hsp33"/>
</dbReference>
<dbReference type="InterPro" id="IPR016154">
    <property type="entry name" value="Heat_shock_Hsp33_C"/>
</dbReference>
<dbReference type="InterPro" id="IPR016153">
    <property type="entry name" value="Heat_shock_Hsp33_N"/>
</dbReference>
<dbReference type="NCBIfam" id="NF001033">
    <property type="entry name" value="PRK00114.1"/>
    <property type="match status" value="1"/>
</dbReference>
<dbReference type="PANTHER" id="PTHR30111">
    <property type="entry name" value="33 KDA CHAPERONIN"/>
    <property type="match status" value="1"/>
</dbReference>
<dbReference type="PANTHER" id="PTHR30111:SF1">
    <property type="entry name" value="33 KDA CHAPERONIN"/>
    <property type="match status" value="1"/>
</dbReference>
<dbReference type="Pfam" id="PF01430">
    <property type="entry name" value="HSP33"/>
    <property type="match status" value="1"/>
</dbReference>
<dbReference type="PIRSF" id="PIRSF005261">
    <property type="entry name" value="Heat_shock_Hsp33"/>
    <property type="match status" value="1"/>
</dbReference>
<dbReference type="SUPFAM" id="SSF64397">
    <property type="entry name" value="Hsp33 domain"/>
    <property type="match status" value="1"/>
</dbReference>
<dbReference type="SUPFAM" id="SSF118352">
    <property type="entry name" value="HSP33 redox switch-like"/>
    <property type="match status" value="1"/>
</dbReference>
<keyword id="KW-0143">Chaperone</keyword>
<keyword id="KW-0963">Cytoplasm</keyword>
<keyword id="KW-1015">Disulfide bond</keyword>
<keyword id="KW-0676">Redox-active center</keyword>
<keyword id="KW-0862">Zinc</keyword>
<protein>
    <recommendedName>
        <fullName evidence="1">33 kDa chaperonin</fullName>
    </recommendedName>
    <alternativeName>
        <fullName evidence="1">Heat shock protein 33 homolog</fullName>
        <shortName evidence="1">HSP33</shortName>
    </alternativeName>
</protein>